<proteinExistence type="inferred from homology"/>
<sequence>MTSLTLALDAMGGDHGPHVTVPAALRALKSHSSLKIILVGDKTEIDVYLRQAEQPLLSRIEVIHTDEVVSMSDRPVHALRTRKNSSMRLSIELVRDGRAAACVSAGNTGALMAMAKVLLKTLPGVDRPALVSCLPSVTQKPVYLLDLGANISCDSETLFQFAVMGSVLCEAVDKKSRPKVALLNVGTEEIKGNDQVQQAAQILQNTDQINYTGFIEGDEIYSGNVDVIVCDGFVGNITLKTSEGIAKLLVHQLKRGLTQGFFVRFLAKLIAPRIQAVLSQMNPDHYNGASLIGLRGIVVKSHGNADETAYLQAINLAVTEAQRRLPEMIKDRLESILLDINN</sequence>
<dbReference type="EC" id="2.3.1.274" evidence="1"/>
<dbReference type="EMBL" id="CP000444">
    <property type="protein sequence ID" value="ABI43454.1"/>
    <property type="molecule type" value="Genomic_DNA"/>
</dbReference>
<dbReference type="SMR" id="Q0HTV1"/>
<dbReference type="KEGG" id="shm:Shewmr7_2469"/>
<dbReference type="HOGENOM" id="CLU_039379_1_0_6"/>
<dbReference type="UniPathway" id="UPA00085"/>
<dbReference type="GO" id="GO:0005737">
    <property type="term" value="C:cytoplasm"/>
    <property type="evidence" value="ECO:0007669"/>
    <property type="project" value="UniProtKB-SubCell"/>
</dbReference>
<dbReference type="GO" id="GO:0043811">
    <property type="term" value="F:phosphate:acyl-[acyl carrier protein] acyltransferase activity"/>
    <property type="evidence" value="ECO:0007669"/>
    <property type="project" value="UniProtKB-UniRule"/>
</dbReference>
<dbReference type="GO" id="GO:0006633">
    <property type="term" value="P:fatty acid biosynthetic process"/>
    <property type="evidence" value="ECO:0007669"/>
    <property type="project" value="UniProtKB-UniRule"/>
</dbReference>
<dbReference type="GO" id="GO:0008654">
    <property type="term" value="P:phospholipid biosynthetic process"/>
    <property type="evidence" value="ECO:0007669"/>
    <property type="project" value="UniProtKB-KW"/>
</dbReference>
<dbReference type="Gene3D" id="3.40.718.10">
    <property type="entry name" value="Isopropylmalate Dehydrogenase"/>
    <property type="match status" value="1"/>
</dbReference>
<dbReference type="HAMAP" id="MF_00019">
    <property type="entry name" value="PlsX"/>
    <property type="match status" value="1"/>
</dbReference>
<dbReference type="InterPro" id="IPR003664">
    <property type="entry name" value="FA_synthesis"/>
</dbReference>
<dbReference type="InterPro" id="IPR012281">
    <property type="entry name" value="Phospholipid_synth_PlsX-like"/>
</dbReference>
<dbReference type="NCBIfam" id="TIGR00182">
    <property type="entry name" value="plsX"/>
    <property type="match status" value="1"/>
</dbReference>
<dbReference type="PANTHER" id="PTHR30100">
    <property type="entry name" value="FATTY ACID/PHOSPHOLIPID SYNTHESIS PROTEIN PLSX"/>
    <property type="match status" value="1"/>
</dbReference>
<dbReference type="PANTHER" id="PTHR30100:SF1">
    <property type="entry name" value="PHOSPHATE ACYLTRANSFERASE"/>
    <property type="match status" value="1"/>
</dbReference>
<dbReference type="Pfam" id="PF02504">
    <property type="entry name" value="FA_synthesis"/>
    <property type="match status" value="1"/>
</dbReference>
<dbReference type="PIRSF" id="PIRSF002465">
    <property type="entry name" value="Phsphlp_syn_PlsX"/>
    <property type="match status" value="1"/>
</dbReference>
<dbReference type="SUPFAM" id="SSF53659">
    <property type="entry name" value="Isocitrate/Isopropylmalate dehydrogenase-like"/>
    <property type="match status" value="1"/>
</dbReference>
<gene>
    <name evidence="1" type="primary">plsX</name>
    <name type="ordered locus">Shewmr7_2469</name>
</gene>
<accession>Q0HTV1</accession>
<feature type="chain" id="PRO_1000001831" description="Phosphate acyltransferase">
    <location>
        <begin position="1"/>
        <end position="342"/>
    </location>
</feature>
<protein>
    <recommendedName>
        <fullName evidence="1">Phosphate acyltransferase</fullName>
        <ecNumber evidence="1">2.3.1.274</ecNumber>
    </recommendedName>
    <alternativeName>
        <fullName evidence="1">Acyl-ACP phosphotransacylase</fullName>
    </alternativeName>
    <alternativeName>
        <fullName evidence="1">Acyl-[acyl-carrier-protein]--phosphate acyltransferase</fullName>
    </alternativeName>
    <alternativeName>
        <fullName evidence="1">Phosphate-acyl-ACP acyltransferase</fullName>
    </alternativeName>
</protein>
<reference key="1">
    <citation type="submission" date="2006-08" db="EMBL/GenBank/DDBJ databases">
        <title>Complete sequence of chromosome 1 of Shewanella sp. MR-7.</title>
        <authorList>
            <person name="Copeland A."/>
            <person name="Lucas S."/>
            <person name="Lapidus A."/>
            <person name="Barry K."/>
            <person name="Detter J.C."/>
            <person name="Glavina del Rio T."/>
            <person name="Hammon N."/>
            <person name="Israni S."/>
            <person name="Dalin E."/>
            <person name="Tice H."/>
            <person name="Pitluck S."/>
            <person name="Kiss H."/>
            <person name="Brettin T."/>
            <person name="Bruce D."/>
            <person name="Han C."/>
            <person name="Tapia R."/>
            <person name="Gilna P."/>
            <person name="Schmutz J."/>
            <person name="Larimer F."/>
            <person name="Land M."/>
            <person name="Hauser L."/>
            <person name="Kyrpides N."/>
            <person name="Mikhailova N."/>
            <person name="Nealson K."/>
            <person name="Konstantinidis K."/>
            <person name="Klappenbach J."/>
            <person name="Tiedje J."/>
            <person name="Richardson P."/>
        </authorList>
    </citation>
    <scope>NUCLEOTIDE SEQUENCE [LARGE SCALE GENOMIC DNA]</scope>
    <source>
        <strain>MR-7</strain>
    </source>
</reference>
<comment type="function">
    <text evidence="1">Catalyzes the reversible formation of acyl-phosphate (acyl-PO(4)) from acyl-[acyl-carrier-protein] (acyl-ACP). This enzyme utilizes acyl-ACP as fatty acyl donor, but not acyl-CoA.</text>
</comment>
<comment type="catalytic activity">
    <reaction evidence="1">
        <text>a fatty acyl-[ACP] + phosphate = an acyl phosphate + holo-[ACP]</text>
        <dbReference type="Rhea" id="RHEA:42292"/>
        <dbReference type="Rhea" id="RHEA-COMP:9685"/>
        <dbReference type="Rhea" id="RHEA-COMP:14125"/>
        <dbReference type="ChEBI" id="CHEBI:43474"/>
        <dbReference type="ChEBI" id="CHEBI:59918"/>
        <dbReference type="ChEBI" id="CHEBI:64479"/>
        <dbReference type="ChEBI" id="CHEBI:138651"/>
        <dbReference type="EC" id="2.3.1.274"/>
    </reaction>
</comment>
<comment type="pathway">
    <text evidence="1">Lipid metabolism; phospholipid metabolism.</text>
</comment>
<comment type="subunit">
    <text evidence="1">Homodimer. Probably interacts with PlsY.</text>
</comment>
<comment type="subcellular location">
    <subcellularLocation>
        <location evidence="1">Cytoplasm</location>
    </subcellularLocation>
    <text evidence="1">Associated with the membrane possibly through PlsY.</text>
</comment>
<comment type="similarity">
    <text evidence="1">Belongs to the PlsX family.</text>
</comment>
<organism>
    <name type="scientific">Shewanella sp. (strain MR-7)</name>
    <dbReference type="NCBI Taxonomy" id="60481"/>
    <lineage>
        <taxon>Bacteria</taxon>
        <taxon>Pseudomonadati</taxon>
        <taxon>Pseudomonadota</taxon>
        <taxon>Gammaproteobacteria</taxon>
        <taxon>Alteromonadales</taxon>
        <taxon>Shewanellaceae</taxon>
        <taxon>Shewanella</taxon>
    </lineage>
</organism>
<name>PLSX_SHESR</name>
<keyword id="KW-0963">Cytoplasm</keyword>
<keyword id="KW-0444">Lipid biosynthesis</keyword>
<keyword id="KW-0443">Lipid metabolism</keyword>
<keyword id="KW-0594">Phospholipid biosynthesis</keyword>
<keyword id="KW-1208">Phospholipid metabolism</keyword>
<keyword id="KW-0808">Transferase</keyword>
<evidence type="ECO:0000255" key="1">
    <source>
        <dbReference type="HAMAP-Rule" id="MF_00019"/>
    </source>
</evidence>